<name>COAD_XANOP</name>
<proteinExistence type="inferred from homology"/>
<accession>B2SIL3</accession>
<comment type="function">
    <text evidence="1">Reversibly transfers an adenylyl group from ATP to 4'-phosphopantetheine, yielding dephospho-CoA (dPCoA) and pyrophosphate.</text>
</comment>
<comment type="catalytic activity">
    <reaction evidence="1">
        <text>(R)-4'-phosphopantetheine + ATP + H(+) = 3'-dephospho-CoA + diphosphate</text>
        <dbReference type="Rhea" id="RHEA:19801"/>
        <dbReference type="ChEBI" id="CHEBI:15378"/>
        <dbReference type="ChEBI" id="CHEBI:30616"/>
        <dbReference type="ChEBI" id="CHEBI:33019"/>
        <dbReference type="ChEBI" id="CHEBI:57328"/>
        <dbReference type="ChEBI" id="CHEBI:61723"/>
        <dbReference type="EC" id="2.7.7.3"/>
    </reaction>
</comment>
<comment type="cofactor">
    <cofactor evidence="1">
        <name>Mg(2+)</name>
        <dbReference type="ChEBI" id="CHEBI:18420"/>
    </cofactor>
</comment>
<comment type="pathway">
    <text evidence="1">Cofactor biosynthesis; coenzyme A biosynthesis; CoA from (R)-pantothenate: step 4/5.</text>
</comment>
<comment type="subunit">
    <text evidence="1">Homohexamer.</text>
</comment>
<comment type="subcellular location">
    <subcellularLocation>
        <location evidence="1">Cytoplasm</location>
    </subcellularLocation>
</comment>
<comment type="similarity">
    <text evidence="1">Belongs to the bacterial CoaD family.</text>
</comment>
<keyword id="KW-0067">ATP-binding</keyword>
<keyword id="KW-0173">Coenzyme A biosynthesis</keyword>
<keyword id="KW-0963">Cytoplasm</keyword>
<keyword id="KW-0460">Magnesium</keyword>
<keyword id="KW-0547">Nucleotide-binding</keyword>
<keyword id="KW-0548">Nucleotidyltransferase</keyword>
<keyword id="KW-0808">Transferase</keyword>
<gene>
    <name evidence="1" type="primary">coaD</name>
    <name type="ordered locus">PXO_00311</name>
</gene>
<sequence length="168" mass="18286">MSVANSRTAVYPGTFDPITNGHIDLVNRAAPLFERVVVGVAYSPSKGPALSLERRVALAQEALAAHANVEVRGFDTLLAHFVRQMGAGVLLRGLRAVSDFEYEFQMASMNRHLIPEVETLFLTPSEQYSFISSSLVREIARLGGDVSGFVPASVVEALRQVRESRAQA</sequence>
<evidence type="ECO:0000255" key="1">
    <source>
        <dbReference type="HAMAP-Rule" id="MF_00151"/>
    </source>
</evidence>
<reference key="1">
    <citation type="journal article" date="2008" name="BMC Genomics">
        <title>Genome sequence and rapid evolution of the rice pathogen Xanthomonas oryzae pv. oryzae PXO99A.</title>
        <authorList>
            <person name="Salzberg S.L."/>
            <person name="Sommer D.D."/>
            <person name="Schatz M.C."/>
            <person name="Phillippy A.M."/>
            <person name="Rabinowicz P.D."/>
            <person name="Tsuge S."/>
            <person name="Furutani A."/>
            <person name="Ochiai H."/>
            <person name="Delcher A.L."/>
            <person name="Kelley D."/>
            <person name="Madupu R."/>
            <person name="Puiu D."/>
            <person name="Radune D."/>
            <person name="Shumway M."/>
            <person name="Trapnell C."/>
            <person name="Aparna G."/>
            <person name="Jha G."/>
            <person name="Pandey A."/>
            <person name="Patil P.B."/>
            <person name="Ishihara H."/>
            <person name="Meyer D.F."/>
            <person name="Szurek B."/>
            <person name="Verdier V."/>
            <person name="Koebnik R."/>
            <person name="Dow J.M."/>
            <person name="Ryan R.P."/>
            <person name="Hirata H."/>
            <person name="Tsuyumu S."/>
            <person name="Won Lee S."/>
            <person name="Seo Y.-S."/>
            <person name="Sriariyanum M."/>
            <person name="Ronald P.C."/>
            <person name="Sonti R.V."/>
            <person name="Van Sluys M.-A."/>
            <person name="Leach J.E."/>
            <person name="White F.F."/>
            <person name="Bogdanove A.J."/>
        </authorList>
    </citation>
    <scope>NUCLEOTIDE SEQUENCE [LARGE SCALE GENOMIC DNA]</scope>
    <source>
        <strain>PXO99A</strain>
    </source>
</reference>
<dbReference type="EC" id="2.7.7.3" evidence="1"/>
<dbReference type="EMBL" id="CP000967">
    <property type="protein sequence ID" value="ACD58658.1"/>
    <property type="molecule type" value="Genomic_DNA"/>
</dbReference>
<dbReference type="RefSeq" id="WP_011259147.1">
    <property type="nucleotide sequence ID" value="NC_010717.2"/>
</dbReference>
<dbReference type="SMR" id="B2SIL3"/>
<dbReference type="GeneID" id="77337933"/>
<dbReference type="KEGG" id="xop:PXO_00311"/>
<dbReference type="eggNOG" id="COG0669">
    <property type="taxonomic scope" value="Bacteria"/>
</dbReference>
<dbReference type="HOGENOM" id="CLU_100149_0_1_6"/>
<dbReference type="UniPathway" id="UPA00241">
    <property type="reaction ID" value="UER00355"/>
</dbReference>
<dbReference type="Proteomes" id="UP000001740">
    <property type="component" value="Chromosome"/>
</dbReference>
<dbReference type="GO" id="GO:0005737">
    <property type="term" value="C:cytoplasm"/>
    <property type="evidence" value="ECO:0007669"/>
    <property type="project" value="UniProtKB-SubCell"/>
</dbReference>
<dbReference type="GO" id="GO:0005524">
    <property type="term" value="F:ATP binding"/>
    <property type="evidence" value="ECO:0007669"/>
    <property type="project" value="UniProtKB-KW"/>
</dbReference>
<dbReference type="GO" id="GO:0004595">
    <property type="term" value="F:pantetheine-phosphate adenylyltransferase activity"/>
    <property type="evidence" value="ECO:0007669"/>
    <property type="project" value="UniProtKB-UniRule"/>
</dbReference>
<dbReference type="GO" id="GO:0015937">
    <property type="term" value="P:coenzyme A biosynthetic process"/>
    <property type="evidence" value="ECO:0007669"/>
    <property type="project" value="UniProtKB-UniRule"/>
</dbReference>
<dbReference type="CDD" id="cd02163">
    <property type="entry name" value="PPAT"/>
    <property type="match status" value="1"/>
</dbReference>
<dbReference type="Gene3D" id="3.40.50.620">
    <property type="entry name" value="HUPs"/>
    <property type="match status" value="1"/>
</dbReference>
<dbReference type="HAMAP" id="MF_00151">
    <property type="entry name" value="PPAT_bact"/>
    <property type="match status" value="1"/>
</dbReference>
<dbReference type="InterPro" id="IPR004821">
    <property type="entry name" value="Cyt_trans-like"/>
</dbReference>
<dbReference type="InterPro" id="IPR001980">
    <property type="entry name" value="PPAT"/>
</dbReference>
<dbReference type="InterPro" id="IPR014729">
    <property type="entry name" value="Rossmann-like_a/b/a_fold"/>
</dbReference>
<dbReference type="NCBIfam" id="TIGR01510">
    <property type="entry name" value="coaD_prev_kdtB"/>
    <property type="match status" value="1"/>
</dbReference>
<dbReference type="NCBIfam" id="TIGR00125">
    <property type="entry name" value="cyt_tran_rel"/>
    <property type="match status" value="1"/>
</dbReference>
<dbReference type="PANTHER" id="PTHR21342">
    <property type="entry name" value="PHOSPHOPANTETHEINE ADENYLYLTRANSFERASE"/>
    <property type="match status" value="1"/>
</dbReference>
<dbReference type="PANTHER" id="PTHR21342:SF1">
    <property type="entry name" value="PHOSPHOPANTETHEINE ADENYLYLTRANSFERASE"/>
    <property type="match status" value="1"/>
</dbReference>
<dbReference type="Pfam" id="PF01467">
    <property type="entry name" value="CTP_transf_like"/>
    <property type="match status" value="1"/>
</dbReference>
<dbReference type="PRINTS" id="PR01020">
    <property type="entry name" value="LPSBIOSNTHSS"/>
</dbReference>
<dbReference type="SUPFAM" id="SSF52374">
    <property type="entry name" value="Nucleotidylyl transferase"/>
    <property type="match status" value="1"/>
</dbReference>
<feature type="chain" id="PRO_1000096859" description="Phosphopantetheine adenylyltransferase">
    <location>
        <begin position="1"/>
        <end position="168"/>
    </location>
</feature>
<feature type="binding site" evidence="1">
    <location>
        <begin position="14"/>
        <end position="15"/>
    </location>
    <ligand>
        <name>ATP</name>
        <dbReference type="ChEBI" id="CHEBI:30616"/>
    </ligand>
</feature>
<feature type="binding site" evidence="1">
    <location>
        <position position="14"/>
    </location>
    <ligand>
        <name>substrate</name>
    </ligand>
</feature>
<feature type="binding site" evidence="1">
    <location>
        <position position="22"/>
    </location>
    <ligand>
        <name>ATP</name>
        <dbReference type="ChEBI" id="CHEBI:30616"/>
    </ligand>
</feature>
<feature type="binding site" evidence="1">
    <location>
        <position position="46"/>
    </location>
    <ligand>
        <name>substrate</name>
    </ligand>
</feature>
<feature type="binding site" evidence="1">
    <location>
        <position position="78"/>
    </location>
    <ligand>
        <name>substrate</name>
    </ligand>
</feature>
<feature type="binding site" evidence="1">
    <location>
        <position position="92"/>
    </location>
    <ligand>
        <name>substrate</name>
    </ligand>
</feature>
<feature type="binding site" evidence="1">
    <location>
        <begin position="93"/>
        <end position="95"/>
    </location>
    <ligand>
        <name>ATP</name>
        <dbReference type="ChEBI" id="CHEBI:30616"/>
    </ligand>
</feature>
<feature type="binding site" evidence="1">
    <location>
        <position position="103"/>
    </location>
    <ligand>
        <name>ATP</name>
        <dbReference type="ChEBI" id="CHEBI:30616"/>
    </ligand>
</feature>
<feature type="binding site" evidence="1">
    <location>
        <begin position="128"/>
        <end position="134"/>
    </location>
    <ligand>
        <name>ATP</name>
        <dbReference type="ChEBI" id="CHEBI:30616"/>
    </ligand>
</feature>
<feature type="site" description="Transition state stabilizer" evidence="1">
    <location>
        <position position="22"/>
    </location>
</feature>
<organism>
    <name type="scientific">Xanthomonas oryzae pv. oryzae (strain PXO99A)</name>
    <dbReference type="NCBI Taxonomy" id="360094"/>
    <lineage>
        <taxon>Bacteria</taxon>
        <taxon>Pseudomonadati</taxon>
        <taxon>Pseudomonadota</taxon>
        <taxon>Gammaproteobacteria</taxon>
        <taxon>Lysobacterales</taxon>
        <taxon>Lysobacteraceae</taxon>
        <taxon>Xanthomonas</taxon>
    </lineage>
</organism>
<protein>
    <recommendedName>
        <fullName evidence="1">Phosphopantetheine adenylyltransferase</fullName>
        <ecNumber evidence="1">2.7.7.3</ecNumber>
    </recommendedName>
    <alternativeName>
        <fullName evidence="1">Dephospho-CoA pyrophosphorylase</fullName>
    </alternativeName>
    <alternativeName>
        <fullName evidence="1">Pantetheine-phosphate adenylyltransferase</fullName>
        <shortName evidence="1">PPAT</shortName>
    </alternativeName>
</protein>